<reference key="1">
    <citation type="submission" date="2006-01" db="EMBL/GenBank/DDBJ databases">
        <authorList>
            <person name="Chen C.H."/>
            <person name="Ding S.T."/>
        </authorList>
    </citation>
    <scope>NUCLEOTIDE SEQUENCE [MRNA]</scope>
</reference>
<sequence>MVYISNGQALDSRSQSPWRLSFITDFFWGIAEFVVLFFRTLLQQDVKKRRGYGGSSDSRYDDGRGPPGNPPRRMGRINHLRGPNPPPMAGGUGR</sequence>
<protein>
    <recommendedName>
        <fullName evidence="3">Selenoprotein K</fullName>
        <shortName evidence="3">SelK</shortName>
    </recommendedName>
</protein>
<feature type="chain" id="PRO_0000290204" description="Selenoprotein K">
    <location>
        <begin position="1"/>
        <end position="94"/>
    </location>
</feature>
<feature type="transmembrane region" description="Helical" evidence="4">
    <location>
        <begin position="20"/>
        <end position="42"/>
    </location>
</feature>
<feature type="region of interest" description="Disordered" evidence="5">
    <location>
        <begin position="48"/>
        <end position="94"/>
    </location>
</feature>
<feature type="site" description="Cleavage; by CAPN2" evidence="1">
    <location>
        <begin position="81"/>
        <end position="82"/>
    </location>
</feature>
<feature type="non-standard amino acid" description="Selenocysteine" evidence="1">
    <location>
        <position position="92"/>
    </location>
</feature>
<evidence type="ECO:0000250" key="1"/>
<evidence type="ECO:0000250" key="2">
    <source>
        <dbReference type="UniProtKB" id="Q9JLJ1"/>
    </source>
</evidence>
<evidence type="ECO:0000250" key="3">
    <source>
        <dbReference type="UniProtKB" id="Q9Y6D0"/>
    </source>
</evidence>
<evidence type="ECO:0000255" key="4"/>
<evidence type="ECO:0000256" key="5">
    <source>
        <dbReference type="SAM" id="MobiDB-lite"/>
    </source>
</evidence>
<evidence type="ECO:0000305" key="6"/>
<name>SELK_PIG</name>
<dbReference type="EMBL" id="DQ372075">
    <property type="protein sequence ID" value="ABD18450.1"/>
    <property type="status" value="ALT_SEQ"/>
    <property type="molecule type" value="mRNA"/>
</dbReference>
<dbReference type="RefSeq" id="NP_001038018.2">
    <property type="nucleotide sequence ID" value="NM_001044553.1"/>
</dbReference>
<dbReference type="FunCoup" id="Q2EN82">
    <property type="interactions" value="357"/>
</dbReference>
<dbReference type="STRING" id="9823.ENSSSCP00000046534"/>
<dbReference type="PaxDb" id="9823-ENSSSCP00000012212"/>
<dbReference type="GeneID" id="733604"/>
<dbReference type="KEGG" id="ssc:733604"/>
<dbReference type="CTD" id="58515"/>
<dbReference type="eggNOG" id="ENOG502S3PW">
    <property type="taxonomic scope" value="Eukaryota"/>
</dbReference>
<dbReference type="InParanoid" id="Q2EN82"/>
<dbReference type="OrthoDB" id="167295at2759"/>
<dbReference type="Proteomes" id="UP000008227">
    <property type="component" value="Unplaced"/>
</dbReference>
<dbReference type="Proteomes" id="UP000314985">
    <property type="component" value="Unplaced"/>
</dbReference>
<dbReference type="Proteomes" id="UP000694570">
    <property type="component" value="Unplaced"/>
</dbReference>
<dbReference type="Proteomes" id="UP000694571">
    <property type="component" value="Unplaced"/>
</dbReference>
<dbReference type="Proteomes" id="UP000694720">
    <property type="component" value="Unplaced"/>
</dbReference>
<dbReference type="Proteomes" id="UP000694722">
    <property type="component" value="Unplaced"/>
</dbReference>
<dbReference type="Proteomes" id="UP000694723">
    <property type="component" value="Unplaced"/>
</dbReference>
<dbReference type="Proteomes" id="UP000694724">
    <property type="component" value="Unplaced"/>
</dbReference>
<dbReference type="Proteomes" id="UP000694725">
    <property type="component" value="Unplaced"/>
</dbReference>
<dbReference type="Proteomes" id="UP000694726">
    <property type="component" value="Unplaced"/>
</dbReference>
<dbReference type="Proteomes" id="UP000694727">
    <property type="component" value="Unplaced"/>
</dbReference>
<dbReference type="Proteomes" id="UP000694728">
    <property type="component" value="Unplaced"/>
</dbReference>
<dbReference type="GO" id="GO:0005783">
    <property type="term" value="C:endoplasmic reticulum"/>
    <property type="evidence" value="ECO:0000250"/>
    <property type="project" value="UniProtKB"/>
</dbReference>
<dbReference type="GO" id="GO:0005789">
    <property type="term" value="C:endoplasmic reticulum membrane"/>
    <property type="evidence" value="ECO:0000250"/>
    <property type="project" value="UniProtKB"/>
</dbReference>
<dbReference type="GO" id="GO:0005794">
    <property type="term" value="C:Golgi apparatus"/>
    <property type="evidence" value="ECO:0000318"/>
    <property type="project" value="GO_Central"/>
</dbReference>
<dbReference type="GO" id="GO:0005886">
    <property type="term" value="C:plasma membrane"/>
    <property type="evidence" value="ECO:0007669"/>
    <property type="project" value="UniProtKB-SubCell"/>
</dbReference>
<dbReference type="GO" id="GO:0006816">
    <property type="term" value="P:calcium ion transport"/>
    <property type="evidence" value="ECO:0000318"/>
    <property type="project" value="GO_Central"/>
</dbReference>
<dbReference type="GO" id="GO:0032469">
    <property type="term" value="P:endoplasmic reticulum calcium ion homeostasis"/>
    <property type="evidence" value="ECO:0000318"/>
    <property type="project" value="GO_Central"/>
</dbReference>
<dbReference type="GO" id="GO:0018345">
    <property type="term" value="P:protein palmitoylation"/>
    <property type="evidence" value="ECO:0000250"/>
    <property type="project" value="UniProtKB"/>
</dbReference>
<dbReference type="InterPro" id="IPR024491">
    <property type="entry name" value="Se_SelK/SelG"/>
</dbReference>
<dbReference type="PANTHER" id="PTHR16875">
    <property type="entry name" value="SELENOPROTEIN K"/>
    <property type="match status" value="1"/>
</dbReference>
<dbReference type="PANTHER" id="PTHR16875:SF0">
    <property type="entry name" value="SELENOPROTEIN K"/>
    <property type="match status" value="1"/>
</dbReference>
<dbReference type="Pfam" id="PF10961">
    <property type="entry name" value="SelK_SelG"/>
    <property type="match status" value="1"/>
</dbReference>
<comment type="function">
    <text evidence="2 3">Required for Ca(2+) flux in immune cells and plays a role in T-cell proliferation and in T-cell and neutrophil migration (By similarity). Involved in endoplasmic reticulum-associated degradation (ERAD) of soluble glycosylated proteins (By similarity). Required for palmitoylation and cell surface expression of CD36 and involved in macrophage uptake of low-density lipoprotein and in foam cell formation (By similarity). Together with ZDHHC6, required for palmitoylation of ITPR1 in immune cells, leading to regulate ITPR1 stability and function. Plays a role in protection of cells from ER stress-induced apoptosis. Protects cells from oxidative stress when overexpressed in cardiomyocytes (By similarity).</text>
</comment>
<comment type="subunit">
    <text evidence="3">Interacts with DERL1, DERL2, DERL3 and SELENOS. The SELENOK-SELENOS complex interacts with VCP. Interacts with ZDHHC6.</text>
</comment>
<comment type="subcellular location">
    <subcellularLocation>
        <location evidence="3">Endoplasmic reticulum membrane</location>
        <topology evidence="4">Single-pass membrane protein</topology>
    </subcellularLocation>
    <subcellularLocation>
        <location evidence="3">Cell membrane</location>
        <topology evidence="4">Single-pass membrane protein</topology>
    </subcellularLocation>
    <text evidence="3">Probably mainly localized in the ER.</text>
</comment>
<comment type="PTM">
    <text evidence="2">Cleaved by CAPN2/m-calpain in resting macrophages but not in activated macrophages. Macrophage activation up-regulates expression of the calpain inhibitor CAST/calpastatin, resulting in inhibition of CAPN2 activity (By similarity).</text>
</comment>
<comment type="PTM">
    <text evidence="3">Truncated SELENOK proteins produced by failed UGA/Sec decoding are ubiquitinated by the CRL2(KLHDC2) complex, which recognizes the diglycine (Gly-Gly) at the C-terminus of truncated SELENOK proteins.</text>
</comment>
<comment type="similarity">
    <text evidence="6">Belongs to the selenoprotein K family.</text>
</comment>
<comment type="sequence caution" evidence="6">
    <conflict type="erroneous termination">
        <sequence resource="EMBL-CDS" id="ABD18450"/>
    </conflict>
    <text>Truncated C-terminus.</text>
</comment>
<proteinExistence type="inferred from homology"/>
<gene>
    <name evidence="3" type="primary">SELENOK</name>
</gene>
<accession>Q2EN82</accession>
<keyword id="KW-0106">Calcium</keyword>
<keyword id="KW-0109">Calcium transport</keyword>
<keyword id="KW-1003">Cell membrane</keyword>
<keyword id="KW-0256">Endoplasmic reticulum</keyword>
<keyword id="KW-0406">Ion transport</keyword>
<keyword id="KW-0472">Membrane</keyword>
<keyword id="KW-1185">Reference proteome</keyword>
<keyword id="KW-0712">Selenocysteine</keyword>
<keyword id="KW-0812">Transmembrane</keyword>
<keyword id="KW-1133">Transmembrane helix</keyword>
<keyword id="KW-0813">Transport</keyword>
<keyword id="KW-0832">Ubl conjugation</keyword>
<organism>
    <name type="scientific">Sus scrofa</name>
    <name type="common">Pig</name>
    <dbReference type="NCBI Taxonomy" id="9823"/>
    <lineage>
        <taxon>Eukaryota</taxon>
        <taxon>Metazoa</taxon>
        <taxon>Chordata</taxon>
        <taxon>Craniata</taxon>
        <taxon>Vertebrata</taxon>
        <taxon>Euteleostomi</taxon>
        <taxon>Mammalia</taxon>
        <taxon>Eutheria</taxon>
        <taxon>Laurasiatheria</taxon>
        <taxon>Artiodactyla</taxon>
        <taxon>Suina</taxon>
        <taxon>Suidae</taxon>
        <taxon>Sus</taxon>
    </lineage>
</organism>